<keyword id="KW-0067">ATP-binding</keyword>
<keyword id="KW-0133">Cell shape</keyword>
<keyword id="KW-0961">Cell wall biogenesis/degradation</keyword>
<keyword id="KW-0963">Cytoplasm</keyword>
<keyword id="KW-0436">Ligase</keyword>
<keyword id="KW-0460">Magnesium</keyword>
<keyword id="KW-0464">Manganese</keyword>
<keyword id="KW-0479">Metal-binding</keyword>
<keyword id="KW-0547">Nucleotide-binding</keyword>
<keyword id="KW-0573">Peptidoglycan synthesis</keyword>
<keyword id="KW-1185">Reference proteome</keyword>
<accession>B7JZB2</accession>
<evidence type="ECO:0000250" key="1"/>
<evidence type="ECO:0000255" key="2">
    <source>
        <dbReference type="HAMAP-Rule" id="MF_00047"/>
    </source>
</evidence>
<feature type="chain" id="PRO_1000116637" description="D-alanine--D-alanine ligase">
    <location>
        <begin position="1"/>
        <end position="351"/>
    </location>
</feature>
<feature type="domain" description="ATP-grasp" evidence="2">
    <location>
        <begin position="135"/>
        <end position="344"/>
    </location>
</feature>
<feature type="binding site" evidence="2">
    <location>
        <begin position="171"/>
        <end position="226"/>
    </location>
    <ligand>
        <name>ATP</name>
        <dbReference type="ChEBI" id="CHEBI:30616"/>
    </ligand>
</feature>
<feature type="binding site" evidence="2">
    <location>
        <position position="297"/>
    </location>
    <ligand>
        <name>Mg(2+)</name>
        <dbReference type="ChEBI" id="CHEBI:18420"/>
        <label>1</label>
    </ligand>
</feature>
<feature type="binding site" evidence="2">
    <location>
        <position position="311"/>
    </location>
    <ligand>
        <name>Mg(2+)</name>
        <dbReference type="ChEBI" id="CHEBI:18420"/>
        <label>1</label>
    </ligand>
</feature>
<feature type="binding site" evidence="2">
    <location>
        <position position="311"/>
    </location>
    <ligand>
        <name>Mg(2+)</name>
        <dbReference type="ChEBI" id="CHEBI:18420"/>
        <label>2</label>
    </ligand>
</feature>
<feature type="binding site" evidence="2">
    <location>
        <position position="313"/>
    </location>
    <ligand>
        <name>Mg(2+)</name>
        <dbReference type="ChEBI" id="CHEBI:18420"/>
        <label>2</label>
    </ligand>
</feature>
<organism>
    <name type="scientific">Rippkaea orientalis (strain PCC 8801 / RF-1)</name>
    <name type="common">Cyanothece sp. (strain PCC 8801)</name>
    <dbReference type="NCBI Taxonomy" id="41431"/>
    <lineage>
        <taxon>Bacteria</taxon>
        <taxon>Bacillati</taxon>
        <taxon>Cyanobacteriota</taxon>
        <taxon>Cyanophyceae</taxon>
        <taxon>Oscillatoriophycideae</taxon>
        <taxon>Chroococcales</taxon>
        <taxon>Aphanothecaceae</taxon>
        <taxon>Rippkaea</taxon>
        <taxon>Rippkaea orientalis</taxon>
    </lineage>
</organism>
<protein>
    <recommendedName>
        <fullName evidence="2">D-alanine--D-alanine ligase</fullName>
        <ecNumber evidence="2">6.3.2.4</ecNumber>
    </recommendedName>
    <alternativeName>
        <fullName evidence="2">D-Ala-D-Ala ligase</fullName>
    </alternativeName>
    <alternativeName>
        <fullName evidence="2">D-alanylalanine synthetase</fullName>
    </alternativeName>
</protein>
<comment type="function">
    <text evidence="2">Cell wall formation.</text>
</comment>
<comment type="catalytic activity">
    <reaction evidence="2">
        <text>2 D-alanine + ATP = D-alanyl-D-alanine + ADP + phosphate + H(+)</text>
        <dbReference type="Rhea" id="RHEA:11224"/>
        <dbReference type="ChEBI" id="CHEBI:15378"/>
        <dbReference type="ChEBI" id="CHEBI:30616"/>
        <dbReference type="ChEBI" id="CHEBI:43474"/>
        <dbReference type="ChEBI" id="CHEBI:57416"/>
        <dbReference type="ChEBI" id="CHEBI:57822"/>
        <dbReference type="ChEBI" id="CHEBI:456216"/>
        <dbReference type="EC" id="6.3.2.4"/>
    </reaction>
</comment>
<comment type="cofactor">
    <cofactor evidence="1">
        <name>Mg(2+)</name>
        <dbReference type="ChEBI" id="CHEBI:18420"/>
    </cofactor>
    <cofactor evidence="1">
        <name>Mn(2+)</name>
        <dbReference type="ChEBI" id="CHEBI:29035"/>
    </cofactor>
    <text evidence="1">Binds 2 magnesium or manganese ions per subunit.</text>
</comment>
<comment type="pathway">
    <text evidence="2">Cell wall biogenesis; peptidoglycan biosynthesis.</text>
</comment>
<comment type="subcellular location">
    <subcellularLocation>
        <location evidence="2">Cytoplasm</location>
    </subcellularLocation>
</comment>
<comment type="similarity">
    <text evidence="2">Belongs to the D-alanine--D-alanine ligase family.</text>
</comment>
<name>DDL_RIPO1</name>
<proteinExistence type="inferred from homology"/>
<gene>
    <name evidence="2" type="primary">ddl</name>
    <name type="ordered locus">PCC8801_3354</name>
</gene>
<sequence>MAKLRVGLLFGGRSGEHEVSLNSAKAIATALQSGENPQKYDIIPIYIQKNGVWQAGDTAQQVLNDAKPLPCEDATSQQLWTFPPQVSEVDVWFPILHGPNGEDGTLQGLLTLMQTPFVGSGVLGSAVGMDKIAMKMAFAQAGLPQVKYIAVDRAQIWSNPCVFPKLCDEIEQRLGYPCFVKPANLGSSVGIAKVRSRSELEKALDSAASYDRRIVIETGVKAREVECAVLGNENPKASVIGEITYNSDFYDYEAKYTDGMAQMHIPAQLPDAIVTQIQDMAIQAFKAVDGAGLARVDFFYVEDSQEVFINEINTLPGFTAFSMYPQLWKETGVPFAELVDQLIQLALERKQ</sequence>
<dbReference type="EC" id="6.3.2.4" evidence="2"/>
<dbReference type="EMBL" id="CP001287">
    <property type="protein sequence ID" value="ACK67323.1"/>
    <property type="molecule type" value="Genomic_DNA"/>
</dbReference>
<dbReference type="RefSeq" id="WP_012596584.1">
    <property type="nucleotide sequence ID" value="NC_011726.1"/>
</dbReference>
<dbReference type="SMR" id="B7JZB2"/>
<dbReference type="STRING" id="41431.PCC8801_3354"/>
<dbReference type="KEGG" id="cyp:PCC8801_3354"/>
<dbReference type="eggNOG" id="COG1181">
    <property type="taxonomic scope" value="Bacteria"/>
</dbReference>
<dbReference type="HOGENOM" id="CLU_039268_0_0_3"/>
<dbReference type="OrthoDB" id="9813261at2"/>
<dbReference type="UniPathway" id="UPA00219"/>
<dbReference type="Proteomes" id="UP000008204">
    <property type="component" value="Chromosome"/>
</dbReference>
<dbReference type="GO" id="GO:0005829">
    <property type="term" value="C:cytosol"/>
    <property type="evidence" value="ECO:0007669"/>
    <property type="project" value="TreeGrafter"/>
</dbReference>
<dbReference type="GO" id="GO:0005524">
    <property type="term" value="F:ATP binding"/>
    <property type="evidence" value="ECO:0007669"/>
    <property type="project" value="UniProtKB-KW"/>
</dbReference>
<dbReference type="GO" id="GO:0008716">
    <property type="term" value="F:D-alanine-D-alanine ligase activity"/>
    <property type="evidence" value="ECO:0007669"/>
    <property type="project" value="UniProtKB-UniRule"/>
</dbReference>
<dbReference type="GO" id="GO:0046872">
    <property type="term" value="F:metal ion binding"/>
    <property type="evidence" value="ECO:0007669"/>
    <property type="project" value="UniProtKB-KW"/>
</dbReference>
<dbReference type="GO" id="GO:0071555">
    <property type="term" value="P:cell wall organization"/>
    <property type="evidence" value="ECO:0007669"/>
    <property type="project" value="UniProtKB-KW"/>
</dbReference>
<dbReference type="GO" id="GO:0009252">
    <property type="term" value="P:peptidoglycan biosynthetic process"/>
    <property type="evidence" value="ECO:0007669"/>
    <property type="project" value="UniProtKB-UniRule"/>
</dbReference>
<dbReference type="GO" id="GO:0008360">
    <property type="term" value="P:regulation of cell shape"/>
    <property type="evidence" value="ECO:0007669"/>
    <property type="project" value="UniProtKB-KW"/>
</dbReference>
<dbReference type="FunFam" id="3.30.1490.20:FF:000007">
    <property type="entry name" value="D-alanine--D-alanine ligase"/>
    <property type="match status" value="1"/>
</dbReference>
<dbReference type="FunFam" id="3.30.470.20:FF:000008">
    <property type="entry name" value="D-alanine--D-alanine ligase"/>
    <property type="match status" value="1"/>
</dbReference>
<dbReference type="Gene3D" id="3.40.50.20">
    <property type="match status" value="1"/>
</dbReference>
<dbReference type="Gene3D" id="3.30.1490.20">
    <property type="entry name" value="ATP-grasp fold, A domain"/>
    <property type="match status" value="1"/>
</dbReference>
<dbReference type="Gene3D" id="3.30.470.20">
    <property type="entry name" value="ATP-grasp fold, B domain"/>
    <property type="match status" value="1"/>
</dbReference>
<dbReference type="HAMAP" id="MF_00047">
    <property type="entry name" value="Dala_Dala_lig"/>
    <property type="match status" value="1"/>
</dbReference>
<dbReference type="InterPro" id="IPR011761">
    <property type="entry name" value="ATP-grasp"/>
</dbReference>
<dbReference type="InterPro" id="IPR013815">
    <property type="entry name" value="ATP_grasp_subdomain_1"/>
</dbReference>
<dbReference type="InterPro" id="IPR000291">
    <property type="entry name" value="D-Ala_lig_Van_CS"/>
</dbReference>
<dbReference type="InterPro" id="IPR005905">
    <property type="entry name" value="D_ala_D_ala"/>
</dbReference>
<dbReference type="InterPro" id="IPR011095">
    <property type="entry name" value="Dala_Dala_lig_C"/>
</dbReference>
<dbReference type="InterPro" id="IPR011127">
    <property type="entry name" value="Dala_Dala_lig_N"/>
</dbReference>
<dbReference type="InterPro" id="IPR016185">
    <property type="entry name" value="PreATP-grasp_dom_sf"/>
</dbReference>
<dbReference type="NCBIfam" id="TIGR01205">
    <property type="entry name" value="D_ala_D_alaTIGR"/>
    <property type="match status" value="1"/>
</dbReference>
<dbReference type="NCBIfam" id="NF002378">
    <property type="entry name" value="PRK01372.1"/>
    <property type="match status" value="1"/>
</dbReference>
<dbReference type="NCBIfam" id="NF002528">
    <property type="entry name" value="PRK01966.1-4"/>
    <property type="match status" value="1"/>
</dbReference>
<dbReference type="PANTHER" id="PTHR23132">
    <property type="entry name" value="D-ALANINE--D-ALANINE LIGASE"/>
    <property type="match status" value="1"/>
</dbReference>
<dbReference type="PANTHER" id="PTHR23132:SF25">
    <property type="entry name" value="D-ALANINE--D-ALANINE LIGASE A"/>
    <property type="match status" value="1"/>
</dbReference>
<dbReference type="Pfam" id="PF07478">
    <property type="entry name" value="Dala_Dala_lig_C"/>
    <property type="match status" value="1"/>
</dbReference>
<dbReference type="Pfam" id="PF01820">
    <property type="entry name" value="Dala_Dala_lig_N"/>
    <property type="match status" value="1"/>
</dbReference>
<dbReference type="PIRSF" id="PIRSF039102">
    <property type="entry name" value="Ddl/VanB"/>
    <property type="match status" value="1"/>
</dbReference>
<dbReference type="SUPFAM" id="SSF56059">
    <property type="entry name" value="Glutathione synthetase ATP-binding domain-like"/>
    <property type="match status" value="1"/>
</dbReference>
<dbReference type="SUPFAM" id="SSF52440">
    <property type="entry name" value="PreATP-grasp domain"/>
    <property type="match status" value="1"/>
</dbReference>
<dbReference type="PROSITE" id="PS50975">
    <property type="entry name" value="ATP_GRASP"/>
    <property type="match status" value="1"/>
</dbReference>
<dbReference type="PROSITE" id="PS00843">
    <property type="entry name" value="DALA_DALA_LIGASE_1"/>
    <property type="match status" value="1"/>
</dbReference>
<dbReference type="PROSITE" id="PS00844">
    <property type="entry name" value="DALA_DALA_LIGASE_2"/>
    <property type="match status" value="1"/>
</dbReference>
<reference key="1">
    <citation type="journal article" date="2011" name="MBio">
        <title>Novel metabolic attributes of the genus Cyanothece, comprising a group of unicellular nitrogen-fixing Cyanobacteria.</title>
        <authorList>
            <person name="Bandyopadhyay A."/>
            <person name="Elvitigala T."/>
            <person name="Welsh E."/>
            <person name="Stockel J."/>
            <person name="Liberton M."/>
            <person name="Min H."/>
            <person name="Sherman L.A."/>
            <person name="Pakrasi H.B."/>
        </authorList>
    </citation>
    <scope>NUCLEOTIDE SEQUENCE [LARGE SCALE GENOMIC DNA]</scope>
    <source>
        <strain>PCC 8801 / RF-1</strain>
    </source>
</reference>